<accession>A0A059JK44</accession>
<protein>
    <recommendedName>
        <fullName evidence="7">ABC multidrug transporter MDR2</fullName>
    </recommendedName>
    <alternativeName>
        <fullName evidence="7">Multidrug resistance protein 2</fullName>
    </alternativeName>
</protein>
<gene>
    <name evidence="7" type="primary">MDR4</name>
    <name type="ORF">H109_00425</name>
</gene>
<comment type="function">
    <text evidence="8">Pleiotropic ABC efflux transporter that may be involved in the modulation susceptibility to a wide range of unrelated cytotoxic compounds.</text>
</comment>
<comment type="subcellular location">
    <subcellularLocation>
        <location evidence="8">Cell membrane</location>
        <topology evidence="1">Multi-pass membrane protein</topology>
    </subcellularLocation>
</comment>
<comment type="induction">
    <text evidence="6">Expression is induced upon exposure to amphotericin B and the allylamine terbinafine. This induction requires the presence of MDR2.</text>
</comment>
<comment type="similarity">
    <text evidence="8">Belongs to the ABC transporter superfamily. ABCB family. Multidrug resistance exporter (TC 3.A.1.201) subfamily.</text>
</comment>
<feature type="chain" id="PRO_0000447183" description="ABC multidrug transporter MDR2">
    <location>
        <begin position="1"/>
        <end position="1379"/>
    </location>
</feature>
<feature type="transmembrane region" description="Helical" evidence="1 3">
    <location>
        <begin position="65"/>
        <end position="85"/>
    </location>
</feature>
<feature type="transmembrane region" description="Helical" evidence="1 3">
    <location>
        <begin position="119"/>
        <end position="139"/>
    </location>
</feature>
<feature type="transmembrane region" description="Helical" evidence="1 3">
    <location>
        <begin position="193"/>
        <end position="213"/>
    </location>
</feature>
<feature type="transmembrane region" description="Helical" evidence="1 3">
    <location>
        <begin position="215"/>
        <end position="235"/>
    </location>
</feature>
<feature type="transmembrane region" description="Helical" evidence="1 3">
    <location>
        <begin position="301"/>
        <end position="321"/>
    </location>
</feature>
<feature type="transmembrane region" description="Helical" evidence="1 3">
    <location>
        <begin position="336"/>
        <end position="356"/>
    </location>
</feature>
<feature type="transmembrane region" description="Helical" evidence="1 3">
    <location>
        <begin position="781"/>
        <end position="801"/>
    </location>
</feature>
<feature type="transmembrane region" description="Helical" evidence="1 3">
    <location>
        <begin position="820"/>
        <end position="840"/>
    </location>
</feature>
<feature type="transmembrane region" description="Helical" evidence="1 3">
    <location>
        <begin position="881"/>
        <end position="901"/>
    </location>
</feature>
<feature type="transmembrane region" description="Helical" evidence="1 3">
    <location>
        <begin position="920"/>
        <end position="942"/>
    </location>
</feature>
<feature type="transmembrane region" description="Helical" evidence="1 3">
    <location>
        <begin position="1008"/>
        <end position="1028"/>
    </location>
</feature>
<feature type="transmembrane region" description="Helical" evidence="1 3">
    <location>
        <begin position="1032"/>
        <end position="1052"/>
    </location>
</feature>
<feature type="domain" description="ABC transmembrane type-1 1" evidence="3">
    <location>
        <begin position="69"/>
        <end position="367"/>
    </location>
</feature>
<feature type="domain" description="ABC transporter 1" evidence="2">
    <location>
        <begin position="403"/>
        <end position="682"/>
    </location>
</feature>
<feature type="domain" description="ABC transmembrane type-1 2" evidence="3">
    <location>
        <begin position="781"/>
        <end position="1068"/>
    </location>
</feature>
<feature type="domain" description="ABC transporter 2" evidence="2">
    <location>
        <begin position="1135"/>
        <end position="1374"/>
    </location>
</feature>
<feature type="region of interest" description="Disordered" evidence="5">
    <location>
        <begin position="738"/>
        <end position="758"/>
    </location>
</feature>
<feature type="binding site" evidence="2">
    <location>
        <begin position="438"/>
        <end position="445"/>
    </location>
    <ligand>
        <name>ATP</name>
        <dbReference type="ChEBI" id="CHEBI:30616"/>
    </ligand>
</feature>
<feature type="binding site" evidence="2">
    <location>
        <begin position="1170"/>
        <end position="1177"/>
    </location>
    <ligand>
        <name>ATP</name>
        <dbReference type="ChEBI" id="CHEBI:30616"/>
    </ligand>
</feature>
<feature type="glycosylation site" description="N-linked (GlcNAc...) asparagine" evidence="4">
    <location>
        <position position="97"/>
    </location>
</feature>
<feature type="glycosylation site" description="N-linked (GlcNAc...) asparagine" evidence="4">
    <location>
        <position position="552"/>
    </location>
</feature>
<feature type="glycosylation site" description="N-linked (GlcNAc...) asparagine" evidence="4">
    <location>
        <position position="633"/>
    </location>
</feature>
<feature type="glycosylation site" description="N-linked (GlcNAc...) asparagine" evidence="4">
    <location>
        <position position="989"/>
    </location>
</feature>
<sequence>MAVEEKNSPTGAAMTNTGILVPSSQQSLPEWWTKTQKFFSRENTITPTFGYFRLLFGTQPGKTDIALIVIGTIAGIGAGIPFPLLGILFGELVDDLNSSTCSTTQAPPGGYQAAITTKVLQVIYVSILNFVCMYIHTGCWSMVGERLVRRLRTKYFHSLLRQEIAFTDTLPSGDVTSRLVSDIEVIQAGTSEKVGLFIGTISYFVAAYIVAFLKVATIAAMLMSVVPIYFLMAFGGGHYIKKYSGRISTHINAATSIVSSSLSHMSIVHAFNANARLEALFAQHLVSARMDALKKAITHSIQFGMLYFVAYASNALAFWQGSRMIADLAEGKPSKVSVGAVYTVIFVLLDASFVLSQMAPFMHIFASAASAGDRLMTTIKRQSAIDGTSSEGDSTISLASEEIELQDVTFNYPARPEVPVLQGVSFKIPPNKHTAIVGTSGSGKSTVVALLERLYDPITGCVRVGNRDLKEINVRHLRGSIGLVQQEPNLLDRSILENIAHGLVSSSQEKHKHLLPTLLGPSLSELTEKIRQGASEDEAVTEQGDVVREIVNLTRHAATLSNAIDFINALPDGLATRVGSSGAELSGGQKQRIALARALIRDPPVLLLDEATAALDSTSERLIQAALNKVSENVTTVSIAHRLATAKDADNIIVMQKGRVMEQGTHMDLVARDGVYAGMVRLQNIGKFSSSSSIMTESTQVDANIDRSLTTDTLLNKEEKLSLEQGVLDEKEKPAQLYMPEEADSLPTEPENEKEKPKQTLWATMKGSFPLIRPNILLISLGLITSIMIGVSYTGEAVIFGHTVGSLSVCRGGPSIRSSGMLFGLLFFILAIVKFAAVIVNGAAFGWAAEKTLYRTRVLSLRSLLRQPLEWHNADGRTPGLLVALVTSDASALSSLTGTTIGVLFSTVANLFAGVILSHVIAWKIAVVLLATLPVLLASGVLRLRVMAQYQKKHQKAYAKATAITVESVDNIKSIAAFSLEQEAYSVFNRSLKAPYKSNMKSVLHGNFWLSLAYSISTLVYALAYWWGSQQILAGMYTQVQFFIVLPALLFSTQSCGQMFALVPDISKARIAASNIVDLLSIKHEGDEEYDKTGSKASAKHTDPRFNMLEDKPRDVEAQLITTTPSSFPTKGMGVQFRNVHFRYPSRPNQPALDDLSINISPGQFCALVGPSGSGKSTTFALLEKFYNPASGSIIIDGVDITKQSGAAFRDTIALVPQENVMFEGTVAFNIGLGARPDVEATQEEIEEACRLANIHDTIAALPDGYNTVCSQDGKQFSGGQRQRLSIARALVRKPRLLLLDESTSALDVESEKHVQDALAKVARKTTIVAIAHRLNTIHRADRIFMIEGGRCVDQGTHAELVERCESYRANVIHQSLDA</sequence>
<keyword id="KW-0067">ATP-binding</keyword>
<keyword id="KW-1003">Cell membrane</keyword>
<keyword id="KW-0325">Glycoprotein</keyword>
<keyword id="KW-0472">Membrane</keyword>
<keyword id="KW-0547">Nucleotide-binding</keyword>
<keyword id="KW-1185">Reference proteome</keyword>
<keyword id="KW-0677">Repeat</keyword>
<keyword id="KW-0812">Transmembrane</keyword>
<keyword id="KW-1133">Transmembrane helix</keyword>
<keyword id="KW-0813">Transport</keyword>
<evidence type="ECO:0000255" key="1"/>
<evidence type="ECO:0000255" key="2">
    <source>
        <dbReference type="PROSITE-ProRule" id="PRU00434"/>
    </source>
</evidence>
<evidence type="ECO:0000255" key="3">
    <source>
        <dbReference type="PROSITE-ProRule" id="PRU00441"/>
    </source>
</evidence>
<evidence type="ECO:0000255" key="4">
    <source>
        <dbReference type="PROSITE-ProRule" id="PRU00498"/>
    </source>
</evidence>
<evidence type="ECO:0000256" key="5">
    <source>
        <dbReference type="SAM" id="MobiDB-lite"/>
    </source>
</evidence>
<evidence type="ECO:0000269" key="6">
    <source>
    </source>
</evidence>
<evidence type="ECO:0000303" key="7">
    <source>
    </source>
</evidence>
<evidence type="ECO:0000305" key="8"/>
<proteinExistence type="evidence at transcript level"/>
<organism>
    <name type="scientific">Trichophyton interdigitale (strain MR816)</name>
    <dbReference type="NCBI Taxonomy" id="1215338"/>
    <lineage>
        <taxon>Eukaryota</taxon>
        <taxon>Fungi</taxon>
        <taxon>Dikarya</taxon>
        <taxon>Ascomycota</taxon>
        <taxon>Pezizomycotina</taxon>
        <taxon>Eurotiomycetes</taxon>
        <taxon>Eurotiomycetidae</taxon>
        <taxon>Onygenales</taxon>
        <taxon>Arthrodermataceae</taxon>
        <taxon>Trichophyton</taxon>
    </lineage>
</organism>
<dbReference type="EMBL" id="AOKY01000033">
    <property type="protein sequence ID" value="KDB27857.1"/>
    <property type="molecule type" value="Genomic_DNA"/>
</dbReference>
<dbReference type="SMR" id="A0A059JK44"/>
<dbReference type="STRING" id="1215338.A0A059JK44"/>
<dbReference type="GlyCosmos" id="A0A059JK44">
    <property type="glycosylation" value="4 sites, No reported glycans"/>
</dbReference>
<dbReference type="HOGENOM" id="CLU_000604_17_2_1"/>
<dbReference type="OMA" id="SCGQMFA"/>
<dbReference type="OrthoDB" id="6500128at2759"/>
<dbReference type="Proteomes" id="UP000024533">
    <property type="component" value="Unassembled WGS sequence"/>
</dbReference>
<dbReference type="GO" id="GO:0005743">
    <property type="term" value="C:mitochondrial inner membrane"/>
    <property type="evidence" value="ECO:0007669"/>
    <property type="project" value="TreeGrafter"/>
</dbReference>
<dbReference type="GO" id="GO:0005886">
    <property type="term" value="C:plasma membrane"/>
    <property type="evidence" value="ECO:0007669"/>
    <property type="project" value="UniProtKB-SubCell"/>
</dbReference>
<dbReference type="GO" id="GO:0015421">
    <property type="term" value="F:ABC-type oligopeptide transporter activity"/>
    <property type="evidence" value="ECO:0007669"/>
    <property type="project" value="TreeGrafter"/>
</dbReference>
<dbReference type="GO" id="GO:0005524">
    <property type="term" value="F:ATP binding"/>
    <property type="evidence" value="ECO:0007669"/>
    <property type="project" value="UniProtKB-KW"/>
</dbReference>
<dbReference type="GO" id="GO:0016887">
    <property type="term" value="F:ATP hydrolysis activity"/>
    <property type="evidence" value="ECO:0007669"/>
    <property type="project" value="InterPro"/>
</dbReference>
<dbReference type="GO" id="GO:0090374">
    <property type="term" value="P:oligopeptide export from mitochondrion"/>
    <property type="evidence" value="ECO:0007669"/>
    <property type="project" value="TreeGrafter"/>
</dbReference>
<dbReference type="CDD" id="cd18577">
    <property type="entry name" value="ABC_6TM_Pgp_ABCB1_D1_like"/>
    <property type="match status" value="1"/>
</dbReference>
<dbReference type="CDD" id="cd18578">
    <property type="entry name" value="ABC_6TM_Pgp_ABCB1_D2_like"/>
    <property type="match status" value="1"/>
</dbReference>
<dbReference type="FunFam" id="1.20.1560.10:FF:000057">
    <property type="entry name" value="ABC multidrug transporter SitT"/>
    <property type="match status" value="1"/>
</dbReference>
<dbReference type="FunFam" id="3.40.50.300:FF:000913">
    <property type="entry name" value="ABC multidrug transporter SitT"/>
    <property type="match status" value="1"/>
</dbReference>
<dbReference type="Gene3D" id="1.20.1560.10">
    <property type="entry name" value="ABC transporter type 1, transmembrane domain"/>
    <property type="match status" value="1"/>
</dbReference>
<dbReference type="Gene3D" id="3.40.50.300">
    <property type="entry name" value="P-loop containing nucleotide triphosphate hydrolases"/>
    <property type="match status" value="2"/>
</dbReference>
<dbReference type="InterPro" id="IPR003593">
    <property type="entry name" value="AAA+_ATPase"/>
</dbReference>
<dbReference type="InterPro" id="IPR011527">
    <property type="entry name" value="ABC1_TM_dom"/>
</dbReference>
<dbReference type="InterPro" id="IPR036640">
    <property type="entry name" value="ABC1_TM_sf"/>
</dbReference>
<dbReference type="InterPro" id="IPR003439">
    <property type="entry name" value="ABC_transporter-like_ATP-bd"/>
</dbReference>
<dbReference type="InterPro" id="IPR017871">
    <property type="entry name" value="ABC_transporter-like_CS"/>
</dbReference>
<dbReference type="InterPro" id="IPR027417">
    <property type="entry name" value="P-loop_NTPase"/>
</dbReference>
<dbReference type="InterPro" id="IPR039421">
    <property type="entry name" value="Type_1_exporter"/>
</dbReference>
<dbReference type="PANTHER" id="PTHR43394:SF11">
    <property type="entry name" value="ATP-BINDING CASSETTE TRANSPORTER"/>
    <property type="match status" value="1"/>
</dbReference>
<dbReference type="PANTHER" id="PTHR43394">
    <property type="entry name" value="ATP-DEPENDENT PERMEASE MDL1, MITOCHONDRIAL"/>
    <property type="match status" value="1"/>
</dbReference>
<dbReference type="Pfam" id="PF00664">
    <property type="entry name" value="ABC_membrane"/>
    <property type="match status" value="2"/>
</dbReference>
<dbReference type="Pfam" id="PF00005">
    <property type="entry name" value="ABC_tran"/>
    <property type="match status" value="2"/>
</dbReference>
<dbReference type="SMART" id="SM00382">
    <property type="entry name" value="AAA"/>
    <property type="match status" value="2"/>
</dbReference>
<dbReference type="SUPFAM" id="SSF90123">
    <property type="entry name" value="ABC transporter transmembrane region"/>
    <property type="match status" value="2"/>
</dbReference>
<dbReference type="SUPFAM" id="SSF52540">
    <property type="entry name" value="P-loop containing nucleoside triphosphate hydrolases"/>
    <property type="match status" value="2"/>
</dbReference>
<dbReference type="PROSITE" id="PS50929">
    <property type="entry name" value="ABC_TM1F"/>
    <property type="match status" value="2"/>
</dbReference>
<dbReference type="PROSITE" id="PS00211">
    <property type="entry name" value="ABC_TRANSPORTER_1"/>
    <property type="match status" value="2"/>
</dbReference>
<dbReference type="PROSITE" id="PS50893">
    <property type="entry name" value="ABC_TRANSPORTER_2"/>
    <property type="match status" value="2"/>
</dbReference>
<name>MDR4_TRIIM</name>
<reference key="1">
    <citation type="journal article" date="2018" name="Genetics">
        <title>Whole-genome analysis illustrates global clonal population structure of the ubiquitous dermatophyte pathogen Trichophyton rubrum.</title>
        <authorList>
            <person name="Persinoti G.F."/>
            <person name="Martinez D.A."/>
            <person name="Li W."/>
            <person name="Doegen A."/>
            <person name="Billmyre R.B."/>
            <person name="Averette A."/>
            <person name="Goldberg J.M."/>
            <person name="Shea T."/>
            <person name="Young S."/>
            <person name="Zeng Q."/>
            <person name="Oliver B.G."/>
            <person name="Barton R."/>
            <person name="Metin B."/>
            <person name="Hilmioglu-Polat S."/>
            <person name="Ilkit M."/>
            <person name="Graeser Y."/>
            <person name="Martinez-Rossi N.M."/>
            <person name="White T.C."/>
            <person name="Heitman J."/>
            <person name="Cuomo C.A."/>
        </authorList>
    </citation>
    <scope>NUCLEOTIDE SEQUENCE [LARGE SCALE GENOMIC DNA]</scope>
    <source>
        <strain>MR816</strain>
    </source>
</reference>
<reference key="2">
    <citation type="journal article" date="2016" name="J. Med. Microbiol.">
        <title>Compensatory expression of multidrug-resistance genes encoding ABC transporters in dermatophytes.</title>
        <authorList>
            <person name="Martins M.P."/>
            <person name="Franceschini A.C.C."/>
            <person name="Jacob T.R."/>
            <person name="Rossi A."/>
            <person name="Martinez-Rossi N.M."/>
        </authorList>
    </citation>
    <scope>INDUCTION</scope>
</reference>